<organism>
    <name type="scientific">Shigella sonnei (strain Ss046)</name>
    <dbReference type="NCBI Taxonomy" id="300269"/>
    <lineage>
        <taxon>Bacteria</taxon>
        <taxon>Pseudomonadati</taxon>
        <taxon>Pseudomonadota</taxon>
        <taxon>Gammaproteobacteria</taxon>
        <taxon>Enterobacterales</taxon>
        <taxon>Enterobacteriaceae</taxon>
        <taxon>Shigella</taxon>
    </lineage>
</organism>
<keyword id="KW-0963">Cytoplasm</keyword>
<keyword id="KW-1185">Reference proteome</keyword>
<feature type="chain" id="PRO_1000046943" description="PF03932 family protein CutC">
    <location>
        <begin position="1"/>
        <end position="248"/>
    </location>
</feature>
<reference key="1">
    <citation type="journal article" date="2005" name="Nucleic Acids Res.">
        <title>Genome dynamics and diversity of Shigella species, the etiologic agents of bacillary dysentery.</title>
        <authorList>
            <person name="Yang F."/>
            <person name="Yang J."/>
            <person name="Zhang X."/>
            <person name="Chen L."/>
            <person name="Jiang Y."/>
            <person name="Yan Y."/>
            <person name="Tang X."/>
            <person name="Wang J."/>
            <person name="Xiong Z."/>
            <person name="Dong J."/>
            <person name="Xue Y."/>
            <person name="Zhu Y."/>
            <person name="Xu X."/>
            <person name="Sun L."/>
            <person name="Chen S."/>
            <person name="Nie H."/>
            <person name="Peng J."/>
            <person name="Xu J."/>
            <person name="Wang Y."/>
            <person name="Yuan Z."/>
            <person name="Wen Y."/>
            <person name="Yao Z."/>
            <person name="Shen Y."/>
            <person name="Qiang B."/>
            <person name="Hou Y."/>
            <person name="Yu J."/>
            <person name="Jin Q."/>
        </authorList>
    </citation>
    <scope>NUCLEOTIDE SEQUENCE [LARGE SCALE GENOMIC DNA]</scope>
    <source>
        <strain>Ss046</strain>
    </source>
</reference>
<accession>Q3Z2Q2</accession>
<name>CUTC_SHISS</name>
<dbReference type="EMBL" id="CP000038">
    <property type="protein sequence ID" value="AAZ87960.1"/>
    <property type="molecule type" value="Genomic_DNA"/>
</dbReference>
<dbReference type="RefSeq" id="WP_001185741.1">
    <property type="nucleotide sequence ID" value="NC_007384.1"/>
</dbReference>
<dbReference type="SMR" id="Q3Z2Q2"/>
<dbReference type="GeneID" id="93776175"/>
<dbReference type="KEGG" id="ssn:SSON_1244"/>
<dbReference type="HOGENOM" id="CLU_050555_3_1_6"/>
<dbReference type="Proteomes" id="UP000002529">
    <property type="component" value="Chromosome"/>
</dbReference>
<dbReference type="GO" id="GO:0005737">
    <property type="term" value="C:cytoplasm"/>
    <property type="evidence" value="ECO:0007669"/>
    <property type="project" value="UniProtKB-SubCell"/>
</dbReference>
<dbReference type="GO" id="GO:0005507">
    <property type="term" value="F:copper ion binding"/>
    <property type="evidence" value="ECO:0007669"/>
    <property type="project" value="TreeGrafter"/>
</dbReference>
<dbReference type="FunFam" id="3.20.20.380:FF:000001">
    <property type="entry name" value="Copper homeostasis protein CutC"/>
    <property type="match status" value="1"/>
</dbReference>
<dbReference type="Gene3D" id="3.20.20.380">
    <property type="entry name" value="Copper homeostasis (CutC) domain"/>
    <property type="match status" value="1"/>
</dbReference>
<dbReference type="HAMAP" id="MF_00795">
    <property type="entry name" value="CutC"/>
    <property type="match status" value="1"/>
</dbReference>
<dbReference type="InterPro" id="IPR005627">
    <property type="entry name" value="CutC-like"/>
</dbReference>
<dbReference type="InterPro" id="IPR036822">
    <property type="entry name" value="CutC-like_dom_sf"/>
</dbReference>
<dbReference type="NCBIfam" id="NF008603">
    <property type="entry name" value="PRK11572.1"/>
    <property type="match status" value="1"/>
</dbReference>
<dbReference type="PANTHER" id="PTHR12598">
    <property type="entry name" value="COPPER HOMEOSTASIS PROTEIN CUTC"/>
    <property type="match status" value="1"/>
</dbReference>
<dbReference type="PANTHER" id="PTHR12598:SF0">
    <property type="entry name" value="COPPER HOMEOSTASIS PROTEIN CUTC HOMOLOG"/>
    <property type="match status" value="1"/>
</dbReference>
<dbReference type="Pfam" id="PF03932">
    <property type="entry name" value="CutC"/>
    <property type="match status" value="1"/>
</dbReference>
<dbReference type="SUPFAM" id="SSF110395">
    <property type="entry name" value="CutC-like"/>
    <property type="match status" value="1"/>
</dbReference>
<protein>
    <recommendedName>
        <fullName evidence="1">PF03932 family protein CutC</fullName>
    </recommendedName>
</protein>
<comment type="subunit">
    <text evidence="1">Homodimer.</text>
</comment>
<comment type="subcellular location">
    <subcellularLocation>
        <location evidence="1">Cytoplasm</location>
    </subcellularLocation>
</comment>
<comment type="similarity">
    <text evidence="1">Belongs to the CutC family.</text>
</comment>
<comment type="caution">
    <text evidence="1">Once thought to be involved in copper homeostasis, experiments in E.coli have shown this is not the case.</text>
</comment>
<gene>
    <name evidence="1" type="primary">cutC</name>
    <name type="ordered locus">SSON_1244</name>
</gene>
<evidence type="ECO:0000255" key="1">
    <source>
        <dbReference type="HAMAP-Rule" id="MF_00795"/>
    </source>
</evidence>
<proteinExistence type="inferred from homology"/>
<sequence>MALLEICCYSMECALTAQQNGADRVELCAAPKEGGLTPSLGVLKSVRQRVTIPVHPIIRPRGGDFCYSDGEFAAILEDVRTVRELGFPGLVTGVLDVDGNVDMPRMEKIMAAAGPLAVTFHRAFDMCANPLYTLNNLAELGIARVLTSGQKSDALQGLSKIMELIAHRDAPIIMAGAGVRAENLHHFLDAGVLEVHSSAGAWQASPMRYRNQGLSMSSDEHADEYSRYIVDGAAVAEMKGIIERHQAK</sequence>